<organism>
    <name type="scientific">Haemophilus influenzae (strain ATCC 51907 / DSM 11121 / KW20 / Rd)</name>
    <dbReference type="NCBI Taxonomy" id="71421"/>
    <lineage>
        <taxon>Bacteria</taxon>
        <taxon>Pseudomonadati</taxon>
        <taxon>Pseudomonadota</taxon>
        <taxon>Gammaproteobacteria</taxon>
        <taxon>Pasteurellales</taxon>
        <taxon>Pasteurellaceae</taxon>
        <taxon>Haemophilus</taxon>
    </lineage>
</organism>
<sequence>MFIDTSELCDLYAEQVDVVEPIFSSFGGVSNFYGKVTTVKCFESNGLIAEVLEENGEGRVLVIDGGGAVRRGLIDAELAQLAVDNGWEGIIVYGAVRQIQQLENLDIGIHALAPIPVSADESSAGESDIPVNFGGVTFFPEDYIYADLTGIILSQEPLDLED</sequence>
<gene>
    <name evidence="1" type="primary">rraA</name>
    <name type="ordered locus">HI_0508</name>
</gene>
<comment type="function">
    <text evidence="1">Globally modulates RNA abundance by binding to RNase E (Rne) and regulating its endonucleolytic activity. Can modulate Rne action in a substrate-dependent manner by altering the composition of the degradosome. Modulates RNA-binding and helicase activities of the degradosome.</text>
</comment>
<comment type="subunit">
    <text evidence="1">Homotrimer. Binds to both RNA-binding sites in the C-terminal region of Rne and to RhlB.</text>
</comment>
<comment type="subcellular location">
    <subcellularLocation>
        <location evidence="1">Cytoplasm</location>
    </subcellularLocation>
</comment>
<comment type="similarity">
    <text evidence="1">Belongs to the RraA family.</text>
</comment>
<feature type="chain" id="PRO_0000209616" description="Regulator of ribonuclease activity A">
    <location>
        <begin position="1"/>
        <end position="162"/>
    </location>
</feature>
<keyword id="KW-0963">Cytoplasm</keyword>
<keyword id="KW-1185">Reference proteome</keyword>
<proteinExistence type="inferred from homology"/>
<dbReference type="EMBL" id="L42023">
    <property type="protein sequence ID" value="AAC22166.1"/>
    <property type="molecule type" value="Genomic_DNA"/>
</dbReference>
<dbReference type="PIR" id="G64153">
    <property type="entry name" value="G64153"/>
</dbReference>
<dbReference type="RefSeq" id="NP_438666.1">
    <property type="nucleotide sequence ID" value="NC_000907.1"/>
</dbReference>
<dbReference type="SMR" id="P44738"/>
<dbReference type="STRING" id="71421.HI_0508"/>
<dbReference type="EnsemblBacteria" id="AAC22166">
    <property type="protein sequence ID" value="AAC22166"/>
    <property type="gene ID" value="HI_0508"/>
</dbReference>
<dbReference type="KEGG" id="hin:HI_0508"/>
<dbReference type="PATRIC" id="fig|71421.8.peg.527"/>
<dbReference type="eggNOG" id="COG0684">
    <property type="taxonomic scope" value="Bacteria"/>
</dbReference>
<dbReference type="HOGENOM" id="CLU_072626_4_0_6"/>
<dbReference type="OrthoDB" id="943692at2"/>
<dbReference type="PhylomeDB" id="P44738"/>
<dbReference type="BioCyc" id="HINF71421:G1GJ1-521-MONOMER"/>
<dbReference type="Proteomes" id="UP000000579">
    <property type="component" value="Chromosome"/>
</dbReference>
<dbReference type="GO" id="GO:0005737">
    <property type="term" value="C:cytoplasm"/>
    <property type="evidence" value="ECO:0007669"/>
    <property type="project" value="UniProtKB-SubCell"/>
</dbReference>
<dbReference type="GO" id="GO:0060698">
    <property type="term" value="F:endoribonuclease inhibitor activity"/>
    <property type="evidence" value="ECO:0007669"/>
    <property type="project" value="UniProtKB-UniRule"/>
</dbReference>
<dbReference type="GO" id="GO:0019899">
    <property type="term" value="F:enzyme binding"/>
    <property type="evidence" value="ECO:0007669"/>
    <property type="project" value="UniProtKB-UniRule"/>
</dbReference>
<dbReference type="GO" id="GO:0051252">
    <property type="term" value="P:regulation of RNA metabolic process"/>
    <property type="evidence" value="ECO:0007669"/>
    <property type="project" value="InterPro"/>
</dbReference>
<dbReference type="CDD" id="cd16841">
    <property type="entry name" value="RraA_family"/>
    <property type="match status" value="1"/>
</dbReference>
<dbReference type="Gene3D" id="3.50.30.40">
    <property type="entry name" value="Ribonuclease E inhibitor RraA/RraA-like"/>
    <property type="match status" value="1"/>
</dbReference>
<dbReference type="HAMAP" id="MF_00471">
    <property type="entry name" value="RraA"/>
    <property type="match status" value="1"/>
</dbReference>
<dbReference type="InterPro" id="IPR010203">
    <property type="entry name" value="RraA"/>
</dbReference>
<dbReference type="InterPro" id="IPR005493">
    <property type="entry name" value="RraA/RraA-like"/>
</dbReference>
<dbReference type="InterPro" id="IPR036704">
    <property type="entry name" value="RraA/RraA-like_sf"/>
</dbReference>
<dbReference type="InterPro" id="IPR014339">
    <property type="entry name" value="RraA_gpbac"/>
</dbReference>
<dbReference type="NCBIfam" id="TIGR01935">
    <property type="entry name" value="NOT-MenG"/>
    <property type="match status" value="1"/>
</dbReference>
<dbReference type="NCBIfam" id="NF006875">
    <property type="entry name" value="PRK09372.1"/>
    <property type="match status" value="1"/>
</dbReference>
<dbReference type="NCBIfam" id="TIGR02998">
    <property type="entry name" value="RraA_entero"/>
    <property type="match status" value="1"/>
</dbReference>
<dbReference type="PANTHER" id="PTHR33254">
    <property type="entry name" value="4-HYDROXY-4-METHYL-2-OXOGLUTARATE ALDOLASE 3-RELATED"/>
    <property type="match status" value="1"/>
</dbReference>
<dbReference type="PANTHER" id="PTHR33254:SF29">
    <property type="entry name" value="REGULATOR OF RIBONUCLEASE ACTIVITY A"/>
    <property type="match status" value="1"/>
</dbReference>
<dbReference type="Pfam" id="PF03737">
    <property type="entry name" value="RraA-like"/>
    <property type="match status" value="1"/>
</dbReference>
<dbReference type="SUPFAM" id="SSF89562">
    <property type="entry name" value="RraA-like"/>
    <property type="match status" value="1"/>
</dbReference>
<name>RRAA_HAEIN</name>
<reference key="1">
    <citation type="journal article" date="1995" name="Science">
        <title>Whole-genome random sequencing and assembly of Haemophilus influenzae Rd.</title>
        <authorList>
            <person name="Fleischmann R.D."/>
            <person name="Adams M.D."/>
            <person name="White O."/>
            <person name="Clayton R.A."/>
            <person name="Kirkness E.F."/>
            <person name="Kerlavage A.R."/>
            <person name="Bult C.J."/>
            <person name="Tomb J.-F."/>
            <person name="Dougherty B.A."/>
            <person name="Merrick J.M."/>
            <person name="McKenney K."/>
            <person name="Sutton G.G."/>
            <person name="FitzHugh W."/>
            <person name="Fields C.A."/>
            <person name="Gocayne J.D."/>
            <person name="Scott J.D."/>
            <person name="Shirley R."/>
            <person name="Liu L.-I."/>
            <person name="Glodek A."/>
            <person name="Kelley J.M."/>
            <person name="Weidman J.F."/>
            <person name="Phillips C.A."/>
            <person name="Spriggs T."/>
            <person name="Hedblom E."/>
            <person name="Cotton M.D."/>
            <person name="Utterback T.R."/>
            <person name="Hanna M.C."/>
            <person name="Nguyen D.T."/>
            <person name="Saudek D.M."/>
            <person name="Brandon R.C."/>
            <person name="Fine L.D."/>
            <person name="Fritchman J.L."/>
            <person name="Fuhrmann J.L."/>
            <person name="Geoghagen N.S.M."/>
            <person name="Gnehm C.L."/>
            <person name="McDonald L.A."/>
            <person name="Small K.V."/>
            <person name="Fraser C.M."/>
            <person name="Smith H.O."/>
            <person name="Venter J.C."/>
        </authorList>
    </citation>
    <scope>NUCLEOTIDE SEQUENCE [LARGE SCALE GENOMIC DNA]</scope>
    <source>
        <strain>ATCC 51907 / DSM 11121 / KW20 / Rd</strain>
    </source>
</reference>
<evidence type="ECO:0000255" key="1">
    <source>
        <dbReference type="HAMAP-Rule" id="MF_00471"/>
    </source>
</evidence>
<accession>P44738</accession>
<protein>
    <recommendedName>
        <fullName evidence="1">Regulator of ribonuclease activity A</fullName>
    </recommendedName>
</protein>